<protein>
    <recommendedName>
        <fullName evidence="1">Small ribosomal subunit protein eS1</fullName>
    </recommendedName>
    <alternativeName>
        <fullName evidence="2">30S ribosomal protein S3Ae</fullName>
    </alternativeName>
    <alternativeName>
        <fullName evidence="1">Ribosomal protein S1e</fullName>
    </alternativeName>
</protein>
<organism>
    <name type="scientific">Pyrobaculum arsenaticum (strain DSM 13514 / JCM 11321 / PZ6)</name>
    <dbReference type="NCBI Taxonomy" id="340102"/>
    <lineage>
        <taxon>Archaea</taxon>
        <taxon>Thermoproteota</taxon>
        <taxon>Thermoprotei</taxon>
        <taxon>Thermoproteales</taxon>
        <taxon>Thermoproteaceae</taxon>
        <taxon>Pyrobaculum</taxon>
    </lineage>
</organism>
<keyword id="KW-0687">Ribonucleoprotein</keyword>
<keyword id="KW-0689">Ribosomal protein</keyword>
<sequence length="220" mass="24668">MAERQKAVAKQEKVTISKRDPWALKKWFAVHAPPYLGGVFLAEVPATEAEKLLMRTLEVSLYDITKDISHLPVKLKFQIHRVEGLRALTRFKGLELSRDYVKSLVRKGTSKVVAITEVKTKDGMDMRVSVMVITAHRLGTAQKSAVRKKITETLLKKASEMDTSQFLKEVLEGTLAADLFIAAKKIAPLRKVEFAKIKVLKYPPEEERVVVKEAVAEAAS</sequence>
<comment type="similarity">
    <text evidence="1">Belongs to the eukaryotic ribosomal protein eS1 family.</text>
</comment>
<evidence type="ECO:0000255" key="1">
    <source>
        <dbReference type="HAMAP-Rule" id="MF_00359"/>
    </source>
</evidence>
<evidence type="ECO:0000305" key="2"/>
<reference key="1">
    <citation type="submission" date="2007-04" db="EMBL/GenBank/DDBJ databases">
        <title>Complete sequence of Pyrobaculum arsenaticum DSM 13514.</title>
        <authorList>
            <consortium name="US DOE Joint Genome Institute"/>
            <person name="Copeland A."/>
            <person name="Lucas S."/>
            <person name="Lapidus A."/>
            <person name="Barry K."/>
            <person name="Glavina del Rio T."/>
            <person name="Dalin E."/>
            <person name="Tice H."/>
            <person name="Pitluck S."/>
            <person name="Chain P."/>
            <person name="Malfatti S."/>
            <person name="Shin M."/>
            <person name="Vergez L."/>
            <person name="Schmutz J."/>
            <person name="Larimer F."/>
            <person name="Land M."/>
            <person name="Hauser L."/>
            <person name="Kyrpides N."/>
            <person name="Mikhailova N."/>
            <person name="Cozen A.E."/>
            <person name="Fitz-Gibbon S.T."/>
            <person name="House C.H."/>
            <person name="Saltikov C."/>
            <person name="Lowe T.M."/>
            <person name="Richardson P."/>
        </authorList>
    </citation>
    <scope>NUCLEOTIDE SEQUENCE [LARGE SCALE GENOMIC DNA]</scope>
    <source>
        <strain>ATCC 700994 / DSM 13514 / JCM 11321 / PZ6</strain>
    </source>
</reference>
<gene>
    <name evidence="1" type="primary">rps3ae</name>
    <name type="ordered locus">Pars_1852</name>
</gene>
<proteinExistence type="inferred from homology"/>
<name>RS3A_PYRAR</name>
<feature type="chain" id="PRO_1000005198" description="Small ribosomal subunit protein eS1">
    <location>
        <begin position="1"/>
        <end position="220"/>
    </location>
</feature>
<accession>A4WLY6</accession>
<dbReference type="EMBL" id="CP000660">
    <property type="protein sequence ID" value="ABP51403.1"/>
    <property type="molecule type" value="Genomic_DNA"/>
</dbReference>
<dbReference type="SMR" id="A4WLY6"/>
<dbReference type="STRING" id="340102.Pars_1852"/>
<dbReference type="KEGG" id="pas:Pars_1852"/>
<dbReference type="HOGENOM" id="CLU_062507_1_0_2"/>
<dbReference type="OrthoDB" id="30639at2157"/>
<dbReference type="PhylomeDB" id="A4WLY6"/>
<dbReference type="Proteomes" id="UP000001567">
    <property type="component" value="Chromosome"/>
</dbReference>
<dbReference type="GO" id="GO:1990904">
    <property type="term" value="C:ribonucleoprotein complex"/>
    <property type="evidence" value="ECO:0007669"/>
    <property type="project" value="UniProtKB-KW"/>
</dbReference>
<dbReference type="GO" id="GO:0005840">
    <property type="term" value="C:ribosome"/>
    <property type="evidence" value="ECO:0007669"/>
    <property type="project" value="UniProtKB-KW"/>
</dbReference>
<dbReference type="GO" id="GO:0003735">
    <property type="term" value="F:structural constituent of ribosome"/>
    <property type="evidence" value="ECO:0007669"/>
    <property type="project" value="InterPro"/>
</dbReference>
<dbReference type="GO" id="GO:0006412">
    <property type="term" value="P:translation"/>
    <property type="evidence" value="ECO:0007669"/>
    <property type="project" value="UniProtKB-UniRule"/>
</dbReference>
<dbReference type="HAMAP" id="MF_00359">
    <property type="entry name" value="Ribosomal_eS1"/>
    <property type="match status" value="1"/>
</dbReference>
<dbReference type="InterPro" id="IPR001593">
    <property type="entry name" value="Ribosomal_eS1"/>
</dbReference>
<dbReference type="InterPro" id="IPR030838">
    <property type="entry name" value="Ribosomal_eS1_arc"/>
</dbReference>
<dbReference type="NCBIfam" id="NF003142">
    <property type="entry name" value="PRK04057.1"/>
    <property type="match status" value="1"/>
</dbReference>
<dbReference type="PANTHER" id="PTHR11830">
    <property type="entry name" value="40S RIBOSOMAL PROTEIN S3A"/>
    <property type="match status" value="1"/>
</dbReference>
<dbReference type="Pfam" id="PF01015">
    <property type="entry name" value="Ribosomal_S3Ae"/>
    <property type="match status" value="1"/>
</dbReference>
<dbReference type="SMART" id="SM01397">
    <property type="entry name" value="Ribosomal_S3Ae"/>
    <property type="match status" value="1"/>
</dbReference>